<proteinExistence type="inferred from homology"/>
<name>ACDH_MYCBT</name>
<reference key="1">
    <citation type="journal article" date="2009" name="Vaccine">
        <title>Whole genome sequence analysis of Mycobacterium bovis bacillus Calmette-Guerin (BCG) Tokyo 172: a comparative study of BCG vaccine substrains.</title>
        <authorList>
            <person name="Seki M."/>
            <person name="Honda I."/>
            <person name="Fujita I."/>
            <person name="Yano I."/>
            <person name="Yamamoto S."/>
            <person name="Koyama A."/>
        </authorList>
    </citation>
    <scope>NUCLEOTIDE SEQUENCE [LARGE SCALE GENOMIC DNA]</scope>
    <source>
        <strain>BCG / Tokyo 172 / ATCC 35737 / TMC 1019</strain>
    </source>
</reference>
<keyword id="KW-0058">Aromatic hydrocarbons catabolism</keyword>
<keyword id="KW-0520">NAD</keyword>
<keyword id="KW-0560">Oxidoreductase</keyword>
<comment type="function">
    <text evidence="1">Involved in cholesterol degradation. Catalyzes the conversion of propanal to propanoyl-CoA, using NAD(+) and coenzyme A.</text>
</comment>
<comment type="catalytic activity">
    <reaction evidence="1">
        <text>propanal + NAD(+) + CoA = propanoyl-CoA + NADH + H(+)</text>
        <dbReference type="Rhea" id="RHEA:36027"/>
        <dbReference type="ChEBI" id="CHEBI:15378"/>
        <dbReference type="ChEBI" id="CHEBI:17153"/>
        <dbReference type="ChEBI" id="CHEBI:57287"/>
        <dbReference type="ChEBI" id="CHEBI:57392"/>
        <dbReference type="ChEBI" id="CHEBI:57540"/>
        <dbReference type="ChEBI" id="CHEBI:57945"/>
        <dbReference type="EC" id="1.2.1.87"/>
    </reaction>
    <physiologicalReaction direction="left-to-right" evidence="1">
        <dbReference type="Rhea" id="RHEA:36028"/>
    </physiologicalReaction>
</comment>
<comment type="catalytic activity">
    <reaction evidence="1 2">
        <text>acetaldehyde + NAD(+) + CoA = acetyl-CoA + NADH + H(+)</text>
        <dbReference type="Rhea" id="RHEA:23288"/>
        <dbReference type="ChEBI" id="CHEBI:15343"/>
        <dbReference type="ChEBI" id="CHEBI:15378"/>
        <dbReference type="ChEBI" id="CHEBI:57287"/>
        <dbReference type="ChEBI" id="CHEBI:57288"/>
        <dbReference type="ChEBI" id="CHEBI:57540"/>
        <dbReference type="ChEBI" id="CHEBI:57945"/>
        <dbReference type="EC" id="1.2.1.10"/>
    </reaction>
    <physiologicalReaction direction="left-to-right" evidence="1">
        <dbReference type="Rhea" id="RHEA:23289"/>
    </physiologicalReaction>
</comment>
<comment type="subunit">
    <text evidence="1">Monomer. Forms a heterotetramer composed of two aldolase (HsaF) and two dehydrogenase (HsaG) subunits.</text>
</comment>
<comment type="similarity">
    <text evidence="2">Belongs to the acetaldehyde dehydrogenase family.</text>
</comment>
<feature type="chain" id="PRO_0000387675" description="Propanal dehydrogenase (CoA-propanoylating)">
    <location>
        <begin position="1"/>
        <end position="303"/>
    </location>
</feature>
<feature type="active site" description="Acyl-thioester intermediate" evidence="2">
    <location>
        <position position="127"/>
    </location>
</feature>
<feature type="binding site" evidence="2">
    <location>
        <begin position="12"/>
        <end position="15"/>
    </location>
    <ligand>
        <name>NAD(+)</name>
        <dbReference type="ChEBI" id="CHEBI:57540"/>
    </ligand>
</feature>
<feature type="binding site" evidence="2">
    <location>
        <begin position="158"/>
        <end position="166"/>
    </location>
    <ligand>
        <name>NAD(+)</name>
        <dbReference type="ChEBI" id="CHEBI:57540"/>
    </ligand>
</feature>
<feature type="binding site" evidence="2">
    <location>
        <position position="277"/>
    </location>
    <ligand>
        <name>NAD(+)</name>
        <dbReference type="ChEBI" id="CHEBI:57540"/>
    </ligand>
</feature>
<organism>
    <name type="scientific">Mycobacterium bovis (strain BCG / Tokyo 172 / ATCC 35737 / TMC 1019)</name>
    <dbReference type="NCBI Taxonomy" id="561275"/>
    <lineage>
        <taxon>Bacteria</taxon>
        <taxon>Bacillati</taxon>
        <taxon>Actinomycetota</taxon>
        <taxon>Actinomycetes</taxon>
        <taxon>Mycobacteriales</taxon>
        <taxon>Mycobacteriaceae</taxon>
        <taxon>Mycobacterium</taxon>
        <taxon>Mycobacterium tuberculosis complex</taxon>
    </lineage>
</organism>
<gene>
    <name evidence="1" type="primary">hsaG</name>
    <name type="ordered locus">JTY_3600</name>
</gene>
<evidence type="ECO:0000250" key="1">
    <source>
        <dbReference type="UniProtKB" id="P9WQH3"/>
    </source>
</evidence>
<evidence type="ECO:0000255" key="2">
    <source>
        <dbReference type="HAMAP-Rule" id="MF_01657"/>
    </source>
</evidence>
<sequence length="303" mass="32009">MPSKAKVAIVGSGNISTDLLYKLLRSEWLEPRWMVGIDPESDGLARAAKLGLETTHEGVDWLLAQPDKPDLVFEATSAYVHRDAAPKYAEAGIRAIDLTPAAVGPAVIPPANLREHLDAPNVNMITCGGQATIPIVYAVSRIVEVPYAEIVASVASVSAGPGTRANIDEFTKTTARGVQTIGGAARGKAIIILNPADPPMIMRDTIFCAIPTDADREAIAASIHDVVKEVQTYVPGYRLLNEPQFDEPSINSGGQALVTTFVEVEGAGDYLPPYAGNLDIMTAAATKVGEEIAKETLVVGGAR</sequence>
<accession>C1AHZ3</accession>
<dbReference type="EC" id="1.2.1.87" evidence="1"/>
<dbReference type="EC" id="1.2.1.10" evidence="2"/>
<dbReference type="EMBL" id="AP010918">
    <property type="protein sequence ID" value="BAH27872.1"/>
    <property type="molecule type" value="Genomic_DNA"/>
</dbReference>
<dbReference type="RefSeq" id="WP_003419251.1">
    <property type="nucleotide sequence ID" value="NZ_CP014566.1"/>
</dbReference>
<dbReference type="SMR" id="C1AHZ3"/>
<dbReference type="KEGG" id="mbt:JTY_3600"/>
<dbReference type="HOGENOM" id="CLU_062208_0_0_11"/>
<dbReference type="GO" id="GO:0008774">
    <property type="term" value="F:acetaldehyde dehydrogenase (acetylating) activity"/>
    <property type="evidence" value="ECO:0007669"/>
    <property type="project" value="UniProtKB-UniRule"/>
</dbReference>
<dbReference type="GO" id="GO:0051287">
    <property type="term" value="F:NAD binding"/>
    <property type="evidence" value="ECO:0007669"/>
    <property type="project" value="UniProtKB-UniRule"/>
</dbReference>
<dbReference type="GO" id="GO:0009056">
    <property type="term" value="P:catabolic process"/>
    <property type="evidence" value="ECO:0007669"/>
    <property type="project" value="UniProtKB-KW"/>
</dbReference>
<dbReference type="CDD" id="cd23933">
    <property type="entry name" value="ALDH_C"/>
    <property type="match status" value="1"/>
</dbReference>
<dbReference type="Gene3D" id="3.30.360.10">
    <property type="entry name" value="Dihydrodipicolinate Reductase, domain 2"/>
    <property type="match status" value="1"/>
</dbReference>
<dbReference type="Gene3D" id="3.40.50.720">
    <property type="entry name" value="NAD(P)-binding Rossmann-like Domain"/>
    <property type="match status" value="1"/>
</dbReference>
<dbReference type="HAMAP" id="MF_01657">
    <property type="entry name" value="Ac_ald_DH_ac"/>
    <property type="match status" value="1"/>
</dbReference>
<dbReference type="InterPro" id="IPR003361">
    <property type="entry name" value="Acetaldehyde_dehydrogenase"/>
</dbReference>
<dbReference type="InterPro" id="IPR015426">
    <property type="entry name" value="Acetylaldehyde_DH_C"/>
</dbReference>
<dbReference type="InterPro" id="IPR036291">
    <property type="entry name" value="NAD(P)-bd_dom_sf"/>
</dbReference>
<dbReference type="InterPro" id="IPR000534">
    <property type="entry name" value="Semialdehyde_DH_NAD-bd"/>
</dbReference>
<dbReference type="NCBIfam" id="TIGR03215">
    <property type="entry name" value="ac_ald_DH_ac"/>
    <property type="match status" value="1"/>
</dbReference>
<dbReference type="NCBIfam" id="NF006157">
    <property type="entry name" value="PRK08300.1"/>
    <property type="match status" value="1"/>
</dbReference>
<dbReference type="Pfam" id="PF09290">
    <property type="entry name" value="AcetDehyd-dimer"/>
    <property type="match status" value="1"/>
</dbReference>
<dbReference type="Pfam" id="PF01118">
    <property type="entry name" value="Semialdhyde_dh"/>
    <property type="match status" value="1"/>
</dbReference>
<dbReference type="PIRSF" id="PIRSF015689">
    <property type="entry name" value="Actaldh_dh_actl"/>
    <property type="match status" value="1"/>
</dbReference>
<dbReference type="SMART" id="SM00859">
    <property type="entry name" value="Semialdhyde_dh"/>
    <property type="match status" value="1"/>
</dbReference>
<dbReference type="SUPFAM" id="SSF55347">
    <property type="entry name" value="Glyceraldehyde-3-phosphate dehydrogenase-like, C-terminal domain"/>
    <property type="match status" value="1"/>
</dbReference>
<dbReference type="SUPFAM" id="SSF51735">
    <property type="entry name" value="NAD(P)-binding Rossmann-fold domains"/>
    <property type="match status" value="1"/>
</dbReference>
<protein>
    <recommendedName>
        <fullName evidence="1">Propanal dehydrogenase (CoA-propanoylating)</fullName>
        <ecNumber evidence="1">1.2.1.87</ecNumber>
    </recommendedName>
    <alternativeName>
        <fullName evidence="2">Acetaldehyde dehydrogenase</fullName>
        <ecNumber evidence="2">1.2.1.10</ecNumber>
    </alternativeName>
    <alternativeName>
        <fullName evidence="2">Acetaldehyde dehydrogenase [acetylating]</fullName>
    </alternativeName>
</protein>